<reference key="1">
    <citation type="submission" date="2008-06" db="EMBL/GenBank/DDBJ databases">
        <title>Genome and proteome analysis of A. pleuropneumoniae serotype 7.</title>
        <authorList>
            <person name="Linke B."/>
            <person name="Buettner F."/>
            <person name="Martinez-Arias R."/>
            <person name="Goesmann A."/>
            <person name="Baltes N."/>
            <person name="Tegetmeyer H."/>
            <person name="Singh M."/>
            <person name="Gerlach G.F."/>
        </authorList>
    </citation>
    <scope>NUCLEOTIDE SEQUENCE [LARGE SCALE GENOMIC DNA]</scope>
    <source>
        <strain>AP76</strain>
    </source>
</reference>
<gene>
    <name evidence="1" type="primary">lysS</name>
    <name type="ordered locus">APP7_0868</name>
</gene>
<feature type="chain" id="PRO_1000101091" description="Lysine--tRNA ligase">
    <location>
        <begin position="1"/>
        <end position="500"/>
    </location>
</feature>
<feature type="binding site" evidence="1">
    <location>
        <position position="411"/>
    </location>
    <ligand>
        <name>Mg(2+)</name>
        <dbReference type="ChEBI" id="CHEBI:18420"/>
        <label>1</label>
    </ligand>
</feature>
<feature type="binding site" evidence="1">
    <location>
        <position position="418"/>
    </location>
    <ligand>
        <name>Mg(2+)</name>
        <dbReference type="ChEBI" id="CHEBI:18420"/>
        <label>1</label>
    </ligand>
</feature>
<feature type="binding site" evidence="1">
    <location>
        <position position="418"/>
    </location>
    <ligand>
        <name>Mg(2+)</name>
        <dbReference type="ChEBI" id="CHEBI:18420"/>
        <label>2</label>
    </ligand>
</feature>
<organism>
    <name type="scientific">Actinobacillus pleuropneumoniae serotype 7 (strain AP76)</name>
    <dbReference type="NCBI Taxonomy" id="537457"/>
    <lineage>
        <taxon>Bacteria</taxon>
        <taxon>Pseudomonadati</taxon>
        <taxon>Pseudomonadota</taxon>
        <taxon>Gammaproteobacteria</taxon>
        <taxon>Pasteurellales</taxon>
        <taxon>Pasteurellaceae</taxon>
        <taxon>Actinobacillus</taxon>
    </lineage>
</organism>
<comment type="catalytic activity">
    <reaction evidence="1">
        <text>tRNA(Lys) + L-lysine + ATP = L-lysyl-tRNA(Lys) + AMP + diphosphate</text>
        <dbReference type="Rhea" id="RHEA:20792"/>
        <dbReference type="Rhea" id="RHEA-COMP:9696"/>
        <dbReference type="Rhea" id="RHEA-COMP:9697"/>
        <dbReference type="ChEBI" id="CHEBI:30616"/>
        <dbReference type="ChEBI" id="CHEBI:32551"/>
        <dbReference type="ChEBI" id="CHEBI:33019"/>
        <dbReference type="ChEBI" id="CHEBI:78442"/>
        <dbReference type="ChEBI" id="CHEBI:78529"/>
        <dbReference type="ChEBI" id="CHEBI:456215"/>
        <dbReference type="EC" id="6.1.1.6"/>
    </reaction>
</comment>
<comment type="cofactor">
    <cofactor evidence="1">
        <name>Mg(2+)</name>
        <dbReference type="ChEBI" id="CHEBI:18420"/>
    </cofactor>
    <text evidence="1">Binds 3 Mg(2+) ions per subunit.</text>
</comment>
<comment type="subunit">
    <text evidence="1">Homodimer.</text>
</comment>
<comment type="subcellular location">
    <subcellularLocation>
        <location evidence="1">Cytoplasm</location>
    </subcellularLocation>
</comment>
<comment type="similarity">
    <text evidence="1">Belongs to the class-II aminoacyl-tRNA synthetase family.</text>
</comment>
<protein>
    <recommendedName>
        <fullName evidence="1">Lysine--tRNA ligase</fullName>
        <ecNumber evidence="1">6.1.1.6</ecNumber>
    </recommendedName>
    <alternativeName>
        <fullName evidence="1">Lysyl-tRNA synthetase</fullName>
        <shortName evidence="1">LysRS</shortName>
    </alternativeName>
</protein>
<name>SYK_ACTP7</name>
<accession>B3H1E8</accession>
<sequence length="500" mass="56722">MSEVEHQELDLNGEMLARREKLAKLREQGNPFPNTFRRDAYAEKLHAQYDEVEGEALKEQDIQVKVAGRIMLKRVMGKASFFTIQDVSGQIQLYVARDNLAEGVYADKVSMWDLGDIVGAAGTLFKTKTGELTVRCSEVELLTKSLRPLPNKVQGLTDQETRYRQRYLDLISNEESRRTFMIRSKMVSGIRQFFLEKDFIEVETPMLQVIPGGAAAKPFITHHNALDVDMYLRIAPELYLKRLVVGGFERVFELNRNFRNEGVSVRHNPEFTMIEYYQAYADYHDLMDNTEELLRKLAIDILGTTTVPYGEYVFDFGKPFERITMHDAIVKYGNGITREDLDSFEKSVEIAKGLGIEIQKSWGLGSVVNAIFEEVAEHQLIQPTFLMAHPAEISPLARRNDENPEVTDRFELFIGGREIGNGFSELNDAEDQAERFDAQVAAKDAGDDEAMFKDEDFVVALEHGLPPTAGEGLGIDRLAMIFANAPSIRDVILFPAMRQK</sequence>
<evidence type="ECO:0000255" key="1">
    <source>
        <dbReference type="HAMAP-Rule" id="MF_00252"/>
    </source>
</evidence>
<proteinExistence type="inferred from homology"/>
<dbReference type="EC" id="6.1.1.6" evidence="1"/>
<dbReference type="EMBL" id="CP001091">
    <property type="protein sequence ID" value="ACE61520.1"/>
    <property type="molecule type" value="Genomic_DNA"/>
</dbReference>
<dbReference type="RefSeq" id="WP_005617327.1">
    <property type="nucleotide sequence ID" value="NC_010939.1"/>
</dbReference>
<dbReference type="SMR" id="B3H1E8"/>
<dbReference type="KEGG" id="apa:APP7_0868"/>
<dbReference type="HOGENOM" id="CLU_008255_6_0_6"/>
<dbReference type="Proteomes" id="UP000001226">
    <property type="component" value="Chromosome"/>
</dbReference>
<dbReference type="GO" id="GO:0005829">
    <property type="term" value="C:cytosol"/>
    <property type="evidence" value="ECO:0007669"/>
    <property type="project" value="TreeGrafter"/>
</dbReference>
<dbReference type="GO" id="GO:0005524">
    <property type="term" value="F:ATP binding"/>
    <property type="evidence" value="ECO:0007669"/>
    <property type="project" value="UniProtKB-UniRule"/>
</dbReference>
<dbReference type="GO" id="GO:0004824">
    <property type="term" value="F:lysine-tRNA ligase activity"/>
    <property type="evidence" value="ECO:0007669"/>
    <property type="project" value="UniProtKB-UniRule"/>
</dbReference>
<dbReference type="GO" id="GO:0000287">
    <property type="term" value="F:magnesium ion binding"/>
    <property type="evidence" value="ECO:0007669"/>
    <property type="project" value="UniProtKB-UniRule"/>
</dbReference>
<dbReference type="GO" id="GO:0000049">
    <property type="term" value="F:tRNA binding"/>
    <property type="evidence" value="ECO:0007669"/>
    <property type="project" value="TreeGrafter"/>
</dbReference>
<dbReference type="GO" id="GO:0006430">
    <property type="term" value="P:lysyl-tRNA aminoacylation"/>
    <property type="evidence" value="ECO:0007669"/>
    <property type="project" value="UniProtKB-UniRule"/>
</dbReference>
<dbReference type="CDD" id="cd00775">
    <property type="entry name" value="LysRS_core"/>
    <property type="match status" value="1"/>
</dbReference>
<dbReference type="CDD" id="cd04322">
    <property type="entry name" value="LysRS_N"/>
    <property type="match status" value="1"/>
</dbReference>
<dbReference type="FunFam" id="2.40.50.140:FF:000024">
    <property type="entry name" value="Lysine--tRNA ligase"/>
    <property type="match status" value="1"/>
</dbReference>
<dbReference type="FunFam" id="3.30.930.10:FF:000001">
    <property type="entry name" value="Lysine--tRNA ligase"/>
    <property type="match status" value="1"/>
</dbReference>
<dbReference type="Gene3D" id="3.30.930.10">
    <property type="entry name" value="Bira Bifunctional Protein, Domain 2"/>
    <property type="match status" value="1"/>
</dbReference>
<dbReference type="Gene3D" id="2.40.50.140">
    <property type="entry name" value="Nucleic acid-binding proteins"/>
    <property type="match status" value="1"/>
</dbReference>
<dbReference type="HAMAP" id="MF_00252">
    <property type="entry name" value="Lys_tRNA_synth_class2"/>
    <property type="match status" value="1"/>
</dbReference>
<dbReference type="InterPro" id="IPR004364">
    <property type="entry name" value="Aa-tRNA-synt_II"/>
</dbReference>
<dbReference type="InterPro" id="IPR006195">
    <property type="entry name" value="aa-tRNA-synth_II"/>
</dbReference>
<dbReference type="InterPro" id="IPR045864">
    <property type="entry name" value="aa-tRNA-synth_II/BPL/LPL"/>
</dbReference>
<dbReference type="InterPro" id="IPR002313">
    <property type="entry name" value="Lys-tRNA-ligase_II"/>
</dbReference>
<dbReference type="InterPro" id="IPR034762">
    <property type="entry name" value="Lys-tRNA-ligase_II_bac/euk"/>
</dbReference>
<dbReference type="InterPro" id="IPR044136">
    <property type="entry name" value="Lys-tRNA-ligase_II_N"/>
</dbReference>
<dbReference type="InterPro" id="IPR018149">
    <property type="entry name" value="Lys-tRNA-synth_II_C"/>
</dbReference>
<dbReference type="InterPro" id="IPR012340">
    <property type="entry name" value="NA-bd_OB-fold"/>
</dbReference>
<dbReference type="InterPro" id="IPR004365">
    <property type="entry name" value="NA-bd_OB_tRNA"/>
</dbReference>
<dbReference type="NCBIfam" id="TIGR00499">
    <property type="entry name" value="lysS_bact"/>
    <property type="match status" value="1"/>
</dbReference>
<dbReference type="NCBIfam" id="NF001756">
    <property type="entry name" value="PRK00484.1"/>
    <property type="match status" value="1"/>
</dbReference>
<dbReference type="PANTHER" id="PTHR42918:SF15">
    <property type="entry name" value="LYSINE--TRNA LIGASE, CHLOROPLASTIC_MITOCHONDRIAL"/>
    <property type="match status" value="1"/>
</dbReference>
<dbReference type="PANTHER" id="PTHR42918">
    <property type="entry name" value="LYSYL-TRNA SYNTHETASE"/>
    <property type="match status" value="1"/>
</dbReference>
<dbReference type="Pfam" id="PF00152">
    <property type="entry name" value="tRNA-synt_2"/>
    <property type="match status" value="1"/>
</dbReference>
<dbReference type="Pfam" id="PF01336">
    <property type="entry name" value="tRNA_anti-codon"/>
    <property type="match status" value="1"/>
</dbReference>
<dbReference type="PIRSF" id="PIRSF039101">
    <property type="entry name" value="LysRS2"/>
    <property type="match status" value="1"/>
</dbReference>
<dbReference type="PRINTS" id="PR00982">
    <property type="entry name" value="TRNASYNTHLYS"/>
</dbReference>
<dbReference type="SUPFAM" id="SSF55681">
    <property type="entry name" value="Class II aaRS and biotin synthetases"/>
    <property type="match status" value="1"/>
</dbReference>
<dbReference type="SUPFAM" id="SSF50249">
    <property type="entry name" value="Nucleic acid-binding proteins"/>
    <property type="match status" value="1"/>
</dbReference>
<dbReference type="PROSITE" id="PS50862">
    <property type="entry name" value="AA_TRNA_LIGASE_II"/>
    <property type="match status" value="1"/>
</dbReference>
<keyword id="KW-0030">Aminoacyl-tRNA synthetase</keyword>
<keyword id="KW-0067">ATP-binding</keyword>
<keyword id="KW-0963">Cytoplasm</keyword>
<keyword id="KW-0436">Ligase</keyword>
<keyword id="KW-0460">Magnesium</keyword>
<keyword id="KW-0479">Metal-binding</keyword>
<keyword id="KW-0547">Nucleotide-binding</keyword>
<keyword id="KW-0648">Protein biosynthesis</keyword>